<name>HIS1_NITV4</name>
<organism>
    <name type="scientific">Nitratidesulfovibrio vulgaris (strain DP4)</name>
    <name type="common">Desulfovibrio vulgaris</name>
    <dbReference type="NCBI Taxonomy" id="391774"/>
    <lineage>
        <taxon>Bacteria</taxon>
        <taxon>Pseudomonadati</taxon>
        <taxon>Thermodesulfobacteriota</taxon>
        <taxon>Desulfovibrionia</taxon>
        <taxon>Desulfovibrionales</taxon>
        <taxon>Desulfovibrionaceae</taxon>
        <taxon>Nitratidesulfovibrio</taxon>
    </lineage>
</organism>
<accession>A1VHE4</accession>
<evidence type="ECO:0000255" key="1">
    <source>
        <dbReference type="HAMAP-Rule" id="MF_00079"/>
    </source>
</evidence>
<feature type="chain" id="PRO_1000004457" description="ATP phosphoribosyltransferase">
    <location>
        <begin position="1"/>
        <end position="293"/>
    </location>
</feature>
<gene>
    <name evidence="1" type="primary">hisG</name>
    <name type="ordered locus">Dvul_2849</name>
</gene>
<reference key="1">
    <citation type="journal article" date="2009" name="Environ. Microbiol.">
        <title>Contribution of mobile genetic elements to Desulfovibrio vulgaris genome plasticity.</title>
        <authorList>
            <person name="Walker C.B."/>
            <person name="Stolyar S."/>
            <person name="Chivian D."/>
            <person name="Pinel N."/>
            <person name="Gabster J.A."/>
            <person name="Dehal P.S."/>
            <person name="He Z."/>
            <person name="Yang Z.K."/>
            <person name="Yen H.C."/>
            <person name="Zhou J."/>
            <person name="Wall J.D."/>
            <person name="Hazen T.C."/>
            <person name="Arkin A.P."/>
            <person name="Stahl D.A."/>
        </authorList>
    </citation>
    <scope>NUCLEOTIDE SEQUENCE [LARGE SCALE GENOMIC DNA]</scope>
    <source>
        <strain>DP4</strain>
    </source>
</reference>
<proteinExistence type="inferred from homology"/>
<keyword id="KW-0028">Amino-acid biosynthesis</keyword>
<keyword id="KW-0067">ATP-binding</keyword>
<keyword id="KW-0963">Cytoplasm</keyword>
<keyword id="KW-0328">Glycosyltransferase</keyword>
<keyword id="KW-0368">Histidine biosynthesis</keyword>
<keyword id="KW-0460">Magnesium</keyword>
<keyword id="KW-0479">Metal-binding</keyword>
<keyword id="KW-0547">Nucleotide-binding</keyword>
<keyword id="KW-0808">Transferase</keyword>
<protein>
    <recommendedName>
        <fullName evidence="1">ATP phosphoribosyltransferase</fullName>
        <shortName evidence="1">ATP-PRT</shortName>
        <shortName evidence="1">ATP-PRTase</shortName>
        <ecNumber evidence="1">2.4.2.17</ecNumber>
    </recommendedName>
</protein>
<dbReference type="EC" id="2.4.2.17" evidence="1"/>
<dbReference type="EMBL" id="CP000527">
    <property type="protein sequence ID" value="ABM29860.1"/>
    <property type="molecule type" value="Genomic_DNA"/>
</dbReference>
<dbReference type="RefSeq" id="WP_011793124.1">
    <property type="nucleotide sequence ID" value="NC_008751.1"/>
</dbReference>
<dbReference type="SMR" id="A1VHE4"/>
<dbReference type="KEGG" id="dvl:Dvul_2849"/>
<dbReference type="HOGENOM" id="CLU_038115_1_1_7"/>
<dbReference type="UniPathway" id="UPA00031">
    <property type="reaction ID" value="UER00006"/>
</dbReference>
<dbReference type="Proteomes" id="UP000009173">
    <property type="component" value="Chromosome"/>
</dbReference>
<dbReference type="GO" id="GO:0005737">
    <property type="term" value="C:cytoplasm"/>
    <property type="evidence" value="ECO:0007669"/>
    <property type="project" value="UniProtKB-SubCell"/>
</dbReference>
<dbReference type="GO" id="GO:0005524">
    <property type="term" value="F:ATP binding"/>
    <property type="evidence" value="ECO:0007669"/>
    <property type="project" value="UniProtKB-KW"/>
</dbReference>
<dbReference type="GO" id="GO:0003879">
    <property type="term" value="F:ATP phosphoribosyltransferase activity"/>
    <property type="evidence" value="ECO:0007669"/>
    <property type="project" value="UniProtKB-UniRule"/>
</dbReference>
<dbReference type="GO" id="GO:0000287">
    <property type="term" value="F:magnesium ion binding"/>
    <property type="evidence" value="ECO:0007669"/>
    <property type="project" value="UniProtKB-UniRule"/>
</dbReference>
<dbReference type="GO" id="GO:0000105">
    <property type="term" value="P:L-histidine biosynthetic process"/>
    <property type="evidence" value="ECO:0007669"/>
    <property type="project" value="UniProtKB-UniRule"/>
</dbReference>
<dbReference type="FunFam" id="3.40.190.10:FF:000258">
    <property type="entry name" value="ATP phosphoribosyltransferase"/>
    <property type="match status" value="1"/>
</dbReference>
<dbReference type="Gene3D" id="3.30.70.120">
    <property type="match status" value="1"/>
</dbReference>
<dbReference type="Gene3D" id="3.40.190.10">
    <property type="entry name" value="Periplasmic binding protein-like II"/>
    <property type="match status" value="2"/>
</dbReference>
<dbReference type="HAMAP" id="MF_00079">
    <property type="entry name" value="HisG_Long"/>
    <property type="match status" value="1"/>
</dbReference>
<dbReference type="InterPro" id="IPR020621">
    <property type="entry name" value="ATP-PRT_HisG_long"/>
</dbReference>
<dbReference type="InterPro" id="IPR013820">
    <property type="entry name" value="ATP_PRibTrfase_cat"/>
</dbReference>
<dbReference type="InterPro" id="IPR018198">
    <property type="entry name" value="ATP_PRibTrfase_CS"/>
</dbReference>
<dbReference type="InterPro" id="IPR001348">
    <property type="entry name" value="ATP_PRibTrfase_HisG"/>
</dbReference>
<dbReference type="InterPro" id="IPR013115">
    <property type="entry name" value="HisG_C"/>
</dbReference>
<dbReference type="InterPro" id="IPR011322">
    <property type="entry name" value="N-reg_PII-like_a/b"/>
</dbReference>
<dbReference type="InterPro" id="IPR015867">
    <property type="entry name" value="N-reg_PII/ATP_PRibTrfase_C"/>
</dbReference>
<dbReference type="NCBIfam" id="TIGR00070">
    <property type="entry name" value="hisG"/>
    <property type="match status" value="1"/>
</dbReference>
<dbReference type="NCBIfam" id="TIGR03455">
    <property type="entry name" value="HisG_C-term"/>
    <property type="match status" value="1"/>
</dbReference>
<dbReference type="PANTHER" id="PTHR21403:SF10">
    <property type="entry name" value="ATP PHOSPHORIBOSYLTRANSFERASE"/>
    <property type="match status" value="1"/>
</dbReference>
<dbReference type="PANTHER" id="PTHR21403">
    <property type="entry name" value="ATP PHOSPHORIBOSYLTRANSFERASE ATP-PRTASE"/>
    <property type="match status" value="1"/>
</dbReference>
<dbReference type="Pfam" id="PF01634">
    <property type="entry name" value="HisG"/>
    <property type="match status" value="1"/>
</dbReference>
<dbReference type="Pfam" id="PF08029">
    <property type="entry name" value="HisG_C"/>
    <property type="match status" value="1"/>
</dbReference>
<dbReference type="SUPFAM" id="SSF54913">
    <property type="entry name" value="GlnB-like"/>
    <property type="match status" value="1"/>
</dbReference>
<dbReference type="SUPFAM" id="SSF53850">
    <property type="entry name" value="Periplasmic binding protein-like II"/>
    <property type="match status" value="1"/>
</dbReference>
<dbReference type="PROSITE" id="PS01316">
    <property type="entry name" value="ATP_P_PHORIBOSYLTR"/>
    <property type="match status" value="1"/>
</dbReference>
<sequence>MSIRTPMKLGIPKGSLEEATINLLARSGWKIRKHHRNYFPEINDPELTARLCRVQEIPRYIEDGILDVGLTGKDWLLETGSDVVVVSDLVYSKVSNRPARWVLAVAGDSPYTRPEDLAGKRVATELLGVTKRYFADAGIEVNVQYSWGATEAKVVEGLADAIVEVTETGTTIKAHGLRIISEVLLTNTVLIANRAAWEDPCRRRKIEQIDLLLQGALRADSLVGLKMNVPTRCLDAVLDQLPSLNSPTVAGLRDNTWFAVEIVVDNGVVRDLIPRLREAGAEGIIEYALNKVI</sequence>
<comment type="function">
    <text evidence="1">Catalyzes the condensation of ATP and 5-phosphoribose 1-diphosphate to form N'-(5'-phosphoribosyl)-ATP (PR-ATP). Has a crucial role in the pathway because the rate of histidine biosynthesis seems to be controlled primarily by regulation of HisG enzymatic activity.</text>
</comment>
<comment type="catalytic activity">
    <reaction evidence="1">
        <text>1-(5-phospho-beta-D-ribosyl)-ATP + diphosphate = 5-phospho-alpha-D-ribose 1-diphosphate + ATP</text>
        <dbReference type="Rhea" id="RHEA:18473"/>
        <dbReference type="ChEBI" id="CHEBI:30616"/>
        <dbReference type="ChEBI" id="CHEBI:33019"/>
        <dbReference type="ChEBI" id="CHEBI:58017"/>
        <dbReference type="ChEBI" id="CHEBI:73183"/>
        <dbReference type="EC" id="2.4.2.17"/>
    </reaction>
</comment>
<comment type="cofactor">
    <cofactor evidence="1">
        <name>Mg(2+)</name>
        <dbReference type="ChEBI" id="CHEBI:18420"/>
    </cofactor>
</comment>
<comment type="activity regulation">
    <text evidence="1">Feedback inhibited by histidine.</text>
</comment>
<comment type="pathway">
    <text evidence="1">Amino-acid biosynthesis; L-histidine biosynthesis; L-histidine from 5-phospho-alpha-D-ribose 1-diphosphate: step 1/9.</text>
</comment>
<comment type="subcellular location">
    <subcellularLocation>
        <location evidence="1">Cytoplasm</location>
    </subcellularLocation>
</comment>
<comment type="similarity">
    <text evidence="1">Belongs to the ATP phosphoribosyltransferase family. Long subfamily.</text>
</comment>